<reference key="1">
    <citation type="journal article" date="2005" name="Nucleic Acids Res.">
        <title>Genome dynamics and diversity of Shigella species, the etiologic agents of bacillary dysentery.</title>
        <authorList>
            <person name="Yang F."/>
            <person name="Yang J."/>
            <person name="Zhang X."/>
            <person name="Chen L."/>
            <person name="Jiang Y."/>
            <person name="Yan Y."/>
            <person name="Tang X."/>
            <person name="Wang J."/>
            <person name="Xiong Z."/>
            <person name="Dong J."/>
            <person name="Xue Y."/>
            <person name="Zhu Y."/>
            <person name="Xu X."/>
            <person name="Sun L."/>
            <person name="Chen S."/>
            <person name="Nie H."/>
            <person name="Peng J."/>
            <person name="Xu J."/>
            <person name="Wang Y."/>
            <person name="Yuan Z."/>
            <person name="Wen Y."/>
            <person name="Yao Z."/>
            <person name="Shen Y."/>
            <person name="Qiang B."/>
            <person name="Hou Y."/>
            <person name="Yu J."/>
            <person name="Jin Q."/>
        </authorList>
    </citation>
    <scope>NUCLEOTIDE SEQUENCE [LARGE SCALE GENOMIC DNA]</scope>
    <source>
        <strain>Ss046</strain>
    </source>
</reference>
<sequence length="283" mass="31550">MLIIETLPLLRQQIRRLRMEGKRVALVPTMGNLHDGHMKLVDEAKARADVVVVSIFVNPMQFDRPEDLARYPRTLQEDCEKLNKRKVDLVFAPSVKEIYPNGTETHTYVDVPGLSTMLEGASRPGHFRGVSTIVSKLFNLVQPDIACFGEKDFQQLALIRKMVADMGFDIEIVGVPIMRAKDGLALSSRNGYLTAEQRKIAPGLYKVLSSIADKLQAGERDLDEIIAIAGQELNEKGFRADDIQIRDADTLLEVSETSKRAVILVAAWLGDARLIDNKIVELA</sequence>
<name>PANC_SHISS</name>
<keyword id="KW-0067">ATP-binding</keyword>
<keyword id="KW-0963">Cytoplasm</keyword>
<keyword id="KW-0436">Ligase</keyword>
<keyword id="KW-0547">Nucleotide-binding</keyword>
<keyword id="KW-0566">Pantothenate biosynthesis</keyword>
<keyword id="KW-1185">Reference proteome</keyword>
<evidence type="ECO:0000255" key="1">
    <source>
        <dbReference type="HAMAP-Rule" id="MF_00158"/>
    </source>
</evidence>
<protein>
    <recommendedName>
        <fullName evidence="1">Pantothenate synthetase</fullName>
        <shortName evidence="1">PS</shortName>
        <ecNumber evidence="1">6.3.2.1</ecNumber>
    </recommendedName>
    <alternativeName>
        <fullName evidence="1">Pantoate--beta-alanine ligase</fullName>
    </alternativeName>
    <alternativeName>
        <fullName evidence="1">Pantoate-activating enzyme</fullName>
    </alternativeName>
</protein>
<feature type="chain" id="PRO_0000305554" description="Pantothenate synthetase">
    <location>
        <begin position="1"/>
        <end position="283"/>
    </location>
</feature>
<feature type="active site" description="Proton donor" evidence="1">
    <location>
        <position position="37"/>
    </location>
</feature>
<feature type="binding site" evidence="1">
    <location>
        <begin position="30"/>
        <end position="37"/>
    </location>
    <ligand>
        <name>ATP</name>
        <dbReference type="ChEBI" id="CHEBI:30616"/>
    </ligand>
</feature>
<feature type="binding site" evidence="1">
    <location>
        <position position="61"/>
    </location>
    <ligand>
        <name>(R)-pantoate</name>
        <dbReference type="ChEBI" id="CHEBI:15980"/>
    </ligand>
</feature>
<feature type="binding site" evidence="1">
    <location>
        <position position="61"/>
    </location>
    <ligand>
        <name>beta-alanine</name>
        <dbReference type="ChEBI" id="CHEBI:57966"/>
    </ligand>
</feature>
<feature type="binding site" evidence="1">
    <location>
        <begin position="149"/>
        <end position="152"/>
    </location>
    <ligand>
        <name>ATP</name>
        <dbReference type="ChEBI" id="CHEBI:30616"/>
    </ligand>
</feature>
<feature type="binding site" evidence="1">
    <location>
        <position position="155"/>
    </location>
    <ligand>
        <name>(R)-pantoate</name>
        <dbReference type="ChEBI" id="CHEBI:15980"/>
    </ligand>
</feature>
<feature type="binding site" evidence="1">
    <location>
        <begin position="186"/>
        <end position="189"/>
    </location>
    <ligand>
        <name>ATP</name>
        <dbReference type="ChEBI" id="CHEBI:30616"/>
    </ligand>
</feature>
<organism>
    <name type="scientific">Shigella sonnei (strain Ss046)</name>
    <dbReference type="NCBI Taxonomy" id="300269"/>
    <lineage>
        <taxon>Bacteria</taxon>
        <taxon>Pseudomonadati</taxon>
        <taxon>Pseudomonadota</taxon>
        <taxon>Gammaproteobacteria</taxon>
        <taxon>Enterobacterales</taxon>
        <taxon>Enterobacteriaceae</taxon>
        <taxon>Shigella</taxon>
    </lineage>
</organism>
<accession>Q3Z5M7</accession>
<gene>
    <name evidence="1" type="primary">panC</name>
    <name type="ordered locus">SSON_0141</name>
</gene>
<dbReference type="EC" id="6.3.2.1" evidence="1"/>
<dbReference type="EMBL" id="CP000038">
    <property type="protein sequence ID" value="AAZ86935.1"/>
    <property type="molecule type" value="Genomic_DNA"/>
</dbReference>
<dbReference type="RefSeq" id="WP_000905371.1">
    <property type="nucleotide sequence ID" value="NC_007384.1"/>
</dbReference>
<dbReference type="SMR" id="Q3Z5M7"/>
<dbReference type="GeneID" id="93777303"/>
<dbReference type="KEGG" id="ssn:SSON_0141"/>
<dbReference type="HOGENOM" id="CLU_047148_0_0_6"/>
<dbReference type="UniPathway" id="UPA00028">
    <property type="reaction ID" value="UER00005"/>
</dbReference>
<dbReference type="Proteomes" id="UP000002529">
    <property type="component" value="Chromosome"/>
</dbReference>
<dbReference type="GO" id="GO:0005829">
    <property type="term" value="C:cytosol"/>
    <property type="evidence" value="ECO:0007669"/>
    <property type="project" value="TreeGrafter"/>
</dbReference>
<dbReference type="GO" id="GO:0005524">
    <property type="term" value="F:ATP binding"/>
    <property type="evidence" value="ECO:0007669"/>
    <property type="project" value="UniProtKB-KW"/>
</dbReference>
<dbReference type="GO" id="GO:0004592">
    <property type="term" value="F:pantoate-beta-alanine ligase activity"/>
    <property type="evidence" value="ECO:0007669"/>
    <property type="project" value="UniProtKB-UniRule"/>
</dbReference>
<dbReference type="GO" id="GO:0015940">
    <property type="term" value="P:pantothenate biosynthetic process"/>
    <property type="evidence" value="ECO:0007669"/>
    <property type="project" value="UniProtKB-UniRule"/>
</dbReference>
<dbReference type="CDD" id="cd00560">
    <property type="entry name" value="PanC"/>
    <property type="match status" value="1"/>
</dbReference>
<dbReference type="FunFam" id="3.30.1300.10:FF:000001">
    <property type="entry name" value="Pantothenate synthetase"/>
    <property type="match status" value="1"/>
</dbReference>
<dbReference type="FunFam" id="3.40.50.620:FF:000013">
    <property type="entry name" value="Pantothenate synthetase"/>
    <property type="match status" value="1"/>
</dbReference>
<dbReference type="Gene3D" id="3.40.50.620">
    <property type="entry name" value="HUPs"/>
    <property type="match status" value="1"/>
</dbReference>
<dbReference type="Gene3D" id="3.30.1300.10">
    <property type="entry name" value="Pantoate-beta-alanine ligase, C-terminal domain"/>
    <property type="match status" value="1"/>
</dbReference>
<dbReference type="HAMAP" id="MF_00158">
    <property type="entry name" value="PanC"/>
    <property type="match status" value="1"/>
</dbReference>
<dbReference type="InterPro" id="IPR004821">
    <property type="entry name" value="Cyt_trans-like"/>
</dbReference>
<dbReference type="InterPro" id="IPR003721">
    <property type="entry name" value="Pantoate_ligase"/>
</dbReference>
<dbReference type="InterPro" id="IPR042176">
    <property type="entry name" value="Pantoate_ligase_C"/>
</dbReference>
<dbReference type="InterPro" id="IPR014729">
    <property type="entry name" value="Rossmann-like_a/b/a_fold"/>
</dbReference>
<dbReference type="NCBIfam" id="TIGR00125">
    <property type="entry name" value="cyt_tran_rel"/>
    <property type="match status" value="1"/>
</dbReference>
<dbReference type="NCBIfam" id="TIGR00018">
    <property type="entry name" value="panC"/>
    <property type="match status" value="1"/>
</dbReference>
<dbReference type="PANTHER" id="PTHR21299">
    <property type="entry name" value="CYTIDYLATE KINASE/PANTOATE-BETA-ALANINE LIGASE"/>
    <property type="match status" value="1"/>
</dbReference>
<dbReference type="PANTHER" id="PTHR21299:SF1">
    <property type="entry name" value="PANTOATE--BETA-ALANINE LIGASE"/>
    <property type="match status" value="1"/>
</dbReference>
<dbReference type="Pfam" id="PF02569">
    <property type="entry name" value="Pantoate_ligase"/>
    <property type="match status" value="1"/>
</dbReference>
<dbReference type="SUPFAM" id="SSF52374">
    <property type="entry name" value="Nucleotidylyl transferase"/>
    <property type="match status" value="1"/>
</dbReference>
<comment type="function">
    <text evidence="1">Catalyzes the condensation of pantoate with beta-alanine in an ATP-dependent reaction via a pantoyl-adenylate intermediate.</text>
</comment>
<comment type="catalytic activity">
    <reaction evidence="1">
        <text>(R)-pantoate + beta-alanine + ATP = (R)-pantothenate + AMP + diphosphate + H(+)</text>
        <dbReference type="Rhea" id="RHEA:10912"/>
        <dbReference type="ChEBI" id="CHEBI:15378"/>
        <dbReference type="ChEBI" id="CHEBI:15980"/>
        <dbReference type="ChEBI" id="CHEBI:29032"/>
        <dbReference type="ChEBI" id="CHEBI:30616"/>
        <dbReference type="ChEBI" id="CHEBI:33019"/>
        <dbReference type="ChEBI" id="CHEBI:57966"/>
        <dbReference type="ChEBI" id="CHEBI:456215"/>
        <dbReference type="EC" id="6.3.2.1"/>
    </reaction>
</comment>
<comment type="pathway">
    <text evidence="1">Cofactor biosynthesis; (R)-pantothenate biosynthesis; (R)-pantothenate from (R)-pantoate and beta-alanine: step 1/1.</text>
</comment>
<comment type="subunit">
    <text evidence="1">Homodimer.</text>
</comment>
<comment type="subcellular location">
    <subcellularLocation>
        <location evidence="1">Cytoplasm</location>
    </subcellularLocation>
</comment>
<comment type="miscellaneous">
    <text evidence="1">The reaction proceeds by a bi uni uni bi ping pong mechanism.</text>
</comment>
<comment type="similarity">
    <text evidence="1">Belongs to the pantothenate synthetase family.</text>
</comment>
<proteinExistence type="inferred from homology"/>